<feature type="chain" id="PRO_1000101076" description="Large ribosomal subunit protein bL36">
    <location>
        <begin position="1"/>
        <end position="38"/>
    </location>
</feature>
<comment type="similarity">
    <text evidence="1">Belongs to the bacterial ribosomal protein bL36 family.</text>
</comment>
<proteinExistence type="inferred from homology"/>
<evidence type="ECO:0000255" key="1">
    <source>
        <dbReference type="HAMAP-Rule" id="MF_00251"/>
    </source>
</evidence>
<evidence type="ECO:0000305" key="2"/>
<dbReference type="EMBL" id="CP000829">
    <property type="protein sequence ID" value="ACI60427.1"/>
    <property type="molecule type" value="Genomic_DNA"/>
</dbReference>
<dbReference type="SMR" id="B5XJ59"/>
<dbReference type="KEGG" id="soz:Spy49_0071"/>
<dbReference type="HOGENOM" id="CLU_135723_6_2_9"/>
<dbReference type="Proteomes" id="UP000001039">
    <property type="component" value="Chromosome"/>
</dbReference>
<dbReference type="GO" id="GO:0005737">
    <property type="term" value="C:cytoplasm"/>
    <property type="evidence" value="ECO:0007669"/>
    <property type="project" value="UniProtKB-ARBA"/>
</dbReference>
<dbReference type="GO" id="GO:1990904">
    <property type="term" value="C:ribonucleoprotein complex"/>
    <property type="evidence" value="ECO:0007669"/>
    <property type="project" value="UniProtKB-KW"/>
</dbReference>
<dbReference type="GO" id="GO:0005840">
    <property type="term" value="C:ribosome"/>
    <property type="evidence" value="ECO:0007669"/>
    <property type="project" value="UniProtKB-KW"/>
</dbReference>
<dbReference type="GO" id="GO:0003735">
    <property type="term" value="F:structural constituent of ribosome"/>
    <property type="evidence" value="ECO:0007669"/>
    <property type="project" value="InterPro"/>
</dbReference>
<dbReference type="GO" id="GO:0006412">
    <property type="term" value="P:translation"/>
    <property type="evidence" value="ECO:0007669"/>
    <property type="project" value="UniProtKB-UniRule"/>
</dbReference>
<dbReference type="HAMAP" id="MF_00251">
    <property type="entry name" value="Ribosomal_bL36"/>
    <property type="match status" value="1"/>
</dbReference>
<dbReference type="InterPro" id="IPR000473">
    <property type="entry name" value="Ribosomal_bL36"/>
</dbReference>
<dbReference type="InterPro" id="IPR035977">
    <property type="entry name" value="Ribosomal_bL36_sp"/>
</dbReference>
<dbReference type="NCBIfam" id="TIGR01022">
    <property type="entry name" value="rpmJ_bact"/>
    <property type="match status" value="1"/>
</dbReference>
<dbReference type="PANTHER" id="PTHR42888">
    <property type="entry name" value="50S RIBOSOMAL PROTEIN L36, CHLOROPLASTIC"/>
    <property type="match status" value="1"/>
</dbReference>
<dbReference type="PANTHER" id="PTHR42888:SF1">
    <property type="entry name" value="LARGE RIBOSOMAL SUBUNIT PROTEIN BL36C"/>
    <property type="match status" value="1"/>
</dbReference>
<dbReference type="Pfam" id="PF00444">
    <property type="entry name" value="Ribosomal_L36"/>
    <property type="match status" value="1"/>
</dbReference>
<dbReference type="SUPFAM" id="SSF57840">
    <property type="entry name" value="Ribosomal protein L36"/>
    <property type="match status" value="1"/>
</dbReference>
<dbReference type="PROSITE" id="PS00828">
    <property type="entry name" value="RIBOSOMAL_L36"/>
    <property type="match status" value="1"/>
</dbReference>
<protein>
    <recommendedName>
        <fullName evidence="1">Large ribosomal subunit protein bL36</fullName>
    </recommendedName>
    <alternativeName>
        <fullName evidence="2">50S ribosomal protein L36</fullName>
    </alternativeName>
</protein>
<sequence>MKVRPSVKPICEYCKVIRRNGRVMVICPTNPKHKQRQG</sequence>
<name>RL36_STRPZ</name>
<reference key="1">
    <citation type="journal article" date="2008" name="J. Bacteriol.">
        <title>Genome sequence of a nephritogenic and highly transformable M49 strain of Streptococcus pyogenes.</title>
        <authorList>
            <person name="McShan W.M."/>
            <person name="Ferretti J.J."/>
            <person name="Karasawa T."/>
            <person name="Suvorov A.N."/>
            <person name="Lin S."/>
            <person name="Qin B."/>
            <person name="Jia H."/>
            <person name="Kenton S."/>
            <person name="Najar F."/>
            <person name="Wu H."/>
            <person name="Scott J."/>
            <person name="Roe B.A."/>
            <person name="Savic D.J."/>
        </authorList>
    </citation>
    <scope>NUCLEOTIDE SEQUENCE [LARGE SCALE GENOMIC DNA]</scope>
    <source>
        <strain>NZ131</strain>
    </source>
</reference>
<organism>
    <name type="scientific">Streptococcus pyogenes serotype M49 (strain NZ131)</name>
    <dbReference type="NCBI Taxonomy" id="471876"/>
    <lineage>
        <taxon>Bacteria</taxon>
        <taxon>Bacillati</taxon>
        <taxon>Bacillota</taxon>
        <taxon>Bacilli</taxon>
        <taxon>Lactobacillales</taxon>
        <taxon>Streptococcaceae</taxon>
        <taxon>Streptococcus</taxon>
    </lineage>
</organism>
<gene>
    <name evidence="1" type="primary">rpmJ</name>
    <name type="ordered locus">Spy49_0071</name>
</gene>
<keyword id="KW-0687">Ribonucleoprotein</keyword>
<keyword id="KW-0689">Ribosomal protein</keyword>
<accession>B5XJ59</accession>